<feature type="chain" id="PRO_1000079189" description="Probable GTP-binding protein EngB">
    <location>
        <begin position="1"/>
        <end position="208"/>
    </location>
</feature>
<feature type="domain" description="EngB-type G" evidence="1">
    <location>
        <begin position="18"/>
        <end position="187"/>
    </location>
</feature>
<feature type="binding site" evidence="1">
    <location>
        <begin position="26"/>
        <end position="33"/>
    </location>
    <ligand>
        <name>GTP</name>
        <dbReference type="ChEBI" id="CHEBI:37565"/>
    </ligand>
</feature>
<feature type="binding site" evidence="1">
    <location>
        <position position="33"/>
    </location>
    <ligand>
        <name>Mg(2+)</name>
        <dbReference type="ChEBI" id="CHEBI:18420"/>
    </ligand>
</feature>
<feature type="binding site" evidence="1">
    <location>
        <begin position="52"/>
        <end position="56"/>
    </location>
    <ligand>
        <name>GTP</name>
        <dbReference type="ChEBI" id="CHEBI:37565"/>
    </ligand>
</feature>
<feature type="binding site" evidence="1">
    <location>
        <position position="54"/>
    </location>
    <ligand>
        <name>Mg(2+)</name>
        <dbReference type="ChEBI" id="CHEBI:18420"/>
    </ligand>
</feature>
<feature type="binding site" evidence="1">
    <location>
        <begin position="69"/>
        <end position="72"/>
    </location>
    <ligand>
        <name>GTP</name>
        <dbReference type="ChEBI" id="CHEBI:37565"/>
    </ligand>
</feature>
<feature type="binding site" evidence="1">
    <location>
        <begin position="135"/>
        <end position="138"/>
    </location>
    <ligand>
        <name>GTP</name>
        <dbReference type="ChEBI" id="CHEBI:37565"/>
    </ligand>
</feature>
<feature type="binding site" evidence="1">
    <location>
        <begin position="166"/>
        <end position="168"/>
    </location>
    <ligand>
        <name>GTP</name>
        <dbReference type="ChEBI" id="CHEBI:37565"/>
    </ligand>
</feature>
<comment type="function">
    <text evidence="1">Necessary for normal cell division and for the maintenance of normal septation.</text>
</comment>
<comment type="cofactor">
    <cofactor evidence="1">
        <name>Mg(2+)</name>
        <dbReference type="ChEBI" id="CHEBI:18420"/>
    </cofactor>
</comment>
<comment type="similarity">
    <text evidence="1">Belongs to the TRAFAC class TrmE-Era-EngA-EngB-Septin-like GTPase superfamily. EngB GTPase family.</text>
</comment>
<keyword id="KW-0131">Cell cycle</keyword>
<keyword id="KW-0132">Cell division</keyword>
<keyword id="KW-0342">GTP-binding</keyword>
<keyword id="KW-0460">Magnesium</keyword>
<keyword id="KW-0479">Metal-binding</keyword>
<keyword id="KW-0547">Nucleotide-binding</keyword>
<keyword id="KW-0717">Septation</keyword>
<proteinExistence type="inferred from homology"/>
<accession>B1AIQ5</accession>
<name>ENGB_UREP2</name>
<protein>
    <recommendedName>
        <fullName evidence="1">Probable GTP-binding protein EngB</fullName>
    </recommendedName>
</protein>
<gene>
    <name evidence="1" type="primary">engB</name>
    <name type="ordered locus">UPA3_0274</name>
</gene>
<reference key="1">
    <citation type="submission" date="2008-02" db="EMBL/GenBank/DDBJ databases">
        <title>Genome sequence of Ureaplasma parvum serovar 3.</title>
        <authorList>
            <person name="Methe B.A."/>
            <person name="Glass J."/>
            <person name="Waites K."/>
            <person name="Shrivastava S."/>
        </authorList>
    </citation>
    <scope>NUCLEOTIDE SEQUENCE [LARGE SCALE GENOMIC DNA]</scope>
    <source>
        <strain>ATCC 27815 / 27 / NCTC 11736</strain>
    </source>
</reference>
<sequence>MAKFIKSAHYFDQYPIDKQFEICVIGRSNVGKSSLINALANKKIARTSNTPGRTQLVNFFDFNNFRLVDLPGYGFAKVSKEKQTDLAAIIDQYLGYRQNLCAVFQICDINVLTNDDVEMSRYFENQKYAHFVVLNKLDKVNKSYFNNNKHKIAKFLNISTDRLLCVSAQNNINIITLFALMKKVVIQAKQEKILSKKEEKMSSEEEIK</sequence>
<evidence type="ECO:0000255" key="1">
    <source>
        <dbReference type="HAMAP-Rule" id="MF_00321"/>
    </source>
</evidence>
<organism>
    <name type="scientific">Ureaplasma parvum serovar 3 (strain ATCC 27815 / 27 / NCTC 11736)</name>
    <dbReference type="NCBI Taxonomy" id="505682"/>
    <lineage>
        <taxon>Bacteria</taxon>
        <taxon>Bacillati</taxon>
        <taxon>Mycoplasmatota</taxon>
        <taxon>Mycoplasmoidales</taxon>
        <taxon>Mycoplasmoidaceae</taxon>
        <taxon>Ureaplasma</taxon>
    </lineage>
</organism>
<dbReference type="EMBL" id="CP000942">
    <property type="protein sequence ID" value="ACA32922.1"/>
    <property type="molecule type" value="Genomic_DNA"/>
</dbReference>
<dbReference type="SMR" id="B1AIQ5"/>
<dbReference type="GeneID" id="29672535"/>
<dbReference type="KEGG" id="upa:UPA3_0274"/>
<dbReference type="HOGENOM" id="CLU_033732_3_0_14"/>
<dbReference type="Proteomes" id="UP000002162">
    <property type="component" value="Chromosome"/>
</dbReference>
<dbReference type="GO" id="GO:0005829">
    <property type="term" value="C:cytosol"/>
    <property type="evidence" value="ECO:0007669"/>
    <property type="project" value="TreeGrafter"/>
</dbReference>
<dbReference type="GO" id="GO:0005525">
    <property type="term" value="F:GTP binding"/>
    <property type="evidence" value="ECO:0007669"/>
    <property type="project" value="UniProtKB-UniRule"/>
</dbReference>
<dbReference type="GO" id="GO:0046872">
    <property type="term" value="F:metal ion binding"/>
    <property type="evidence" value="ECO:0007669"/>
    <property type="project" value="UniProtKB-KW"/>
</dbReference>
<dbReference type="GO" id="GO:0000917">
    <property type="term" value="P:division septum assembly"/>
    <property type="evidence" value="ECO:0007669"/>
    <property type="project" value="UniProtKB-KW"/>
</dbReference>
<dbReference type="CDD" id="cd01876">
    <property type="entry name" value="YihA_EngB"/>
    <property type="match status" value="1"/>
</dbReference>
<dbReference type="Gene3D" id="3.40.50.300">
    <property type="entry name" value="P-loop containing nucleotide triphosphate hydrolases"/>
    <property type="match status" value="1"/>
</dbReference>
<dbReference type="HAMAP" id="MF_00321">
    <property type="entry name" value="GTPase_EngB"/>
    <property type="match status" value="1"/>
</dbReference>
<dbReference type="InterPro" id="IPR030393">
    <property type="entry name" value="G_ENGB_dom"/>
</dbReference>
<dbReference type="InterPro" id="IPR006073">
    <property type="entry name" value="GTP-bd"/>
</dbReference>
<dbReference type="InterPro" id="IPR019987">
    <property type="entry name" value="GTP-bd_ribosome_bio_YsxC"/>
</dbReference>
<dbReference type="InterPro" id="IPR027417">
    <property type="entry name" value="P-loop_NTPase"/>
</dbReference>
<dbReference type="InterPro" id="IPR005225">
    <property type="entry name" value="Small_GTP-bd"/>
</dbReference>
<dbReference type="NCBIfam" id="TIGR03598">
    <property type="entry name" value="GTPase_YsxC"/>
    <property type="match status" value="1"/>
</dbReference>
<dbReference type="NCBIfam" id="TIGR00231">
    <property type="entry name" value="small_GTP"/>
    <property type="match status" value="1"/>
</dbReference>
<dbReference type="PANTHER" id="PTHR11649:SF13">
    <property type="entry name" value="ENGB-TYPE G DOMAIN-CONTAINING PROTEIN"/>
    <property type="match status" value="1"/>
</dbReference>
<dbReference type="PANTHER" id="PTHR11649">
    <property type="entry name" value="MSS1/TRME-RELATED GTP-BINDING PROTEIN"/>
    <property type="match status" value="1"/>
</dbReference>
<dbReference type="Pfam" id="PF01926">
    <property type="entry name" value="MMR_HSR1"/>
    <property type="match status" value="1"/>
</dbReference>
<dbReference type="SUPFAM" id="SSF52540">
    <property type="entry name" value="P-loop containing nucleoside triphosphate hydrolases"/>
    <property type="match status" value="1"/>
</dbReference>
<dbReference type="PROSITE" id="PS51706">
    <property type="entry name" value="G_ENGB"/>
    <property type="match status" value="1"/>
</dbReference>